<accession>Q9H6L4</accession>
<accession>B4DVA4</accession>
<protein>
    <recommendedName>
        <fullName>Armadillo repeat-containing protein 7</fullName>
    </recommendedName>
</protein>
<proteinExistence type="evidence at protein level"/>
<evidence type="ECO:0000269" key="1">
    <source>
    </source>
</evidence>
<evidence type="ECO:0000303" key="2">
    <source>
    </source>
</evidence>
<evidence type="ECO:0000305" key="3">
    <source>
    </source>
</evidence>
<evidence type="ECO:0007744" key="4">
    <source>
        <dbReference type="PDB" id="7DVQ"/>
    </source>
</evidence>
<evidence type="ECO:0007744" key="5">
    <source>
    </source>
</evidence>
<evidence type="ECO:0007829" key="6">
    <source>
        <dbReference type="PDB" id="7DVQ"/>
    </source>
</evidence>
<dbReference type="EMBL" id="AK025813">
    <property type="protein sequence ID" value="BAB15242.1"/>
    <property type="molecule type" value="mRNA"/>
</dbReference>
<dbReference type="EMBL" id="AK300997">
    <property type="protein sequence ID" value="BAG62616.1"/>
    <property type="molecule type" value="mRNA"/>
</dbReference>
<dbReference type="EMBL" id="AC022211">
    <property type="status" value="NOT_ANNOTATED_CDS"/>
    <property type="molecule type" value="Genomic_DNA"/>
</dbReference>
<dbReference type="EMBL" id="AC111186">
    <property type="status" value="NOT_ANNOTATED_CDS"/>
    <property type="molecule type" value="Genomic_DNA"/>
</dbReference>
<dbReference type="EMBL" id="BC011728">
    <property type="protein sequence ID" value="AAH11728.1"/>
    <property type="molecule type" value="mRNA"/>
</dbReference>
<dbReference type="CCDS" id="CCDS11714.1">
    <molecule id="Q9H6L4-1"/>
</dbReference>
<dbReference type="CCDS" id="CCDS77107.1">
    <molecule id="Q9H6L4-2"/>
</dbReference>
<dbReference type="RefSeq" id="NP_001291200.1">
    <molecule id="Q9H6L4-2"/>
    <property type="nucleotide sequence ID" value="NM_001304271.2"/>
</dbReference>
<dbReference type="RefSeq" id="NP_001291201.1">
    <property type="nucleotide sequence ID" value="NM_001304272.1"/>
</dbReference>
<dbReference type="RefSeq" id="NP_001291202.1">
    <property type="nucleotide sequence ID" value="NM_001304273.1"/>
</dbReference>
<dbReference type="RefSeq" id="NP_078861.1">
    <molecule id="Q9H6L4-1"/>
    <property type="nucleotide sequence ID" value="NM_024585.4"/>
</dbReference>
<dbReference type="PDB" id="7DVQ">
    <property type="method" value="EM"/>
    <property type="resolution" value="2.89 A"/>
    <property type="chains" value="K=1-198"/>
</dbReference>
<dbReference type="PDBsum" id="7DVQ"/>
<dbReference type="EMDB" id="EMD-30875"/>
<dbReference type="SMR" id="Q9H6L4"/>
<dbReference type="BioGRID" id="122766">
    <property type="interactions" value="85"/>
</dbReference>
<dbReference type="FunCoup" id="Q9H6L4">
    <property type="interactions" value="304"/>
</dbReference>
<dbReference type="IntAct" id="Q9H6L4">
    <property type="interactions" value="105"/>
</dbReference>
<dbReference type="STRING" id="9606.ENSP00000245543"/>
<dbReference type="iPTMnet" id="Q9H6L4"/>
<dbReference type="PhosphoSitePlus" id="Q9H6L4"/>
<dbReference type="BioMuta" id="ARMC7"/>
<dbReference type="DMDM" id="74733612"/>
<dbReference type="jPOST" id="Q9H6L4"/>
<dbReference type="MassIVE" id="Q9H6L4"/>
<dbReference type="PaxDb" id="9606-ENSP00000245543"/>
<dbReference type="PeptideAtlas" id="Q9H6L4"/>
<dbReference type="ProteomicsDB" id="81001">
    <molecule id="Q9H6L4-1"/>
</dbReference>
<dbReference type="Pumba" id="Q9H6L4"/>
<dbReference type="TopDownProteomics" id="Q9H6L4-1">
    <molecule id="Q9H6L4-1"/>
</dbReference>
<dbReference type="Antibodypedia" id="19498">
    <property type="antibodies" value="72 antibodies from 19 providers"/>
</dbReference>
<dbReference type="DNASU" id="79637"/>
<dbReference type="Ensembl" id="ENST00000245543.6">
    <molecule id="Q9H6L4-1"/>
    <property type="protein sequence ID" value="ENSP00000245543.1"/>
    <property type="gene ID" value="ENSG00000125449.7"/>
</dbReference>
<dbReference type="Ensembl" id="ENST00000581078.1">
    <molecule id="Q9H6L4-2"/>
    <property type="protein sequence ID" value="ENSP00000462962.1"/>
    <property type="gene ID" value="ENSG00000125449.7"/>
</dbReference>
<dbReference type="GeneID" id="79637"/>
<dbReference type="KEGG" id="hsa:79637"/>
<dbReference type="MANE-Select" id="ENST00000245543.6">
    <property type="protein sequence ID" value="ENSP00000245543.1"/>
    <property type="RefSeq nucleotide sequence ID" value="NM_024585.4"/>
    <property type="RefSeq protein sequence ID" value="NP_078861.1"/>
</dbReference>
<dbReference type="UCSC" id="uc002jmw.1">
    <molecule id="Q9H6L4-1"/>
    <property type="organism name" value="human"/>
</dbReference>
<dbReference type="AGR" id="HGNC:26168"/>
<dbReference type="CTD" id="79637"/>
<dbReference type="DisGeNET" id="79637"/>
<dbReference type="GeneCards" id="ARMC7"/>
<dbReference type="HGNC" id="HGNC:26168">
    <property type="gene designation" value="ARMC7"/>
</dbReference>
<dbReference type="HPA" id="ENSG00000125449">
    <property type="expression patterns" value="Tissue enhanced (kidney)"/>
</dbReference>
<dbReference type="neXtProt" id="NX_Q9H6L4"/>
<dbReference type="OpenTargets" id="ENSG00000125449"/>
<dbReference type="PharmGKB" id="PA134901380"/>
<dbReference type="VEuPathDB" id="HostDB:ENSG00000125449"/>
<dbReference type="eggNOG" id="KOG4646">
    <property type="taxonomic scope" value="Eukaryota"/>
</dbReference>
<dbReference type="GeneTree" id="ENSGT00940000162633"/>
<dbReference type="HOGENOM" id="CLU_2262837_0_0_1"/>
<dbReference type="InParanoid" id="Q9H6L4"/>
<dbReference type="OMA" id="AILQCML"/>
<dbReference type="OrthoDB" id="201709at2759"/>
<dbReference type="PAN-GO" id="Q9H6L4">
    <property type="GO annotations" value="0 GO annotations based on evolutionary models"/>
</dbReference>
<dbReference type="PhylomeDB" id="Q9H6L4"/>
<dbReference type="TreeFam" id="TF354322"/>
<dbReference type="PathwayCommons" id="Q9H6L4"/>
<dbReference type="SignaLink" id="Q9H6L4"/>
<dbReference type="BioGRID-ORCS" id="79637">
    <property type="hits" value="760 hits in 1167 CRISPR screens"/>
</dbReference>
<dbReference type="ChiTaRS" id="ARMC7">
    <property type="organism name" value="human"/>
</dbReference>
<dbReference type="GenomeRNAi" id="79637"/>
<dbReference type="Pharos" id="Q9H6L4">
    <property type="development level" value="Tdark"/>
</dbReference>
<dbReference type="PRO" id="PR:Q9H6L4"/>
<dbReference type="Proteomes" id="UP000005640">
    <property type="component" value="Chromosome 17"/>
</dbReference>
<dbReference type="RNAct" id="Q9H6L4">
    <property type="molecule type" value="protein"/>
</dbReference>
<dbReference type="Bgee" id="ENSG00000125449">
    <property type="expression patterns" value="Expressed in triceps brachii and 203 other cell types or tissues"/>
</dbReference>
<dbReference type="ExpressionAtlas" id="Q9H6L4">
    <property type="expression patterns" value="baseline and differential"/>
</dbReference>
<dbReference type="GO" id="GO:0005681">
    <property type="term" value="C:spliceosomal complex"/>
    <property type="evidence" value="ECO:0007669"/>
    <property type="project" value="UniProtKB-KW"/>
</dbReference>
<dbReference type="GO" id="GO:0006397">
    <property type="term" value="P:mRNA processing"/>
    <property type="evidence" value="ECO:0007669"/>
    <property type="project" value="UniProtKB-KW"/>
</dbReference>
<dbReference type="GO" id="GO:0008380">
    <property type="term" value="P:RNA splicing"/>
    <property type="evidence" value="ECO:0007669"/>
    <property type="project" value="UniProtKB-KW"/>
</dbReference>
<dbReference type="Gene3D" id="1.25.10.10">
    <property type="entry name" value="Leucine-rich Repeat Variant"/>
    <property type="match status" value="1"/>
</dbReference>
<dbReference type="InterPro" id="IPR011989">
    <property type="entry name" value="ARM-like"/>
</dbReference>
<dbReference type="InterPro" id="IPR016024">
    <property type="entry name" value="ARM-type_fold"/>
</dbReference>
<dbReference type="InterPro" id="IPR000225">
    <property type="entry name" value="Armadillo"/>
</dbReference>
<dbReference type="InterPro" id="IPR042462">
    <property type="entry name" value="ARMC7"/>
</dbReference>
<dbReference type="PANTHER" id="PTHR46263">
    <property type="entry name" value="ARMADILLO REPEAT-CONTAINING PROTEIN 7"/>
    <property type="match status" value="1"/>
</dbReference>
<dbReference type="PANTHER" id="PTHR46263:SF1">
    <property type="entry name" value="ARMADILLO REPEAT-CONTAINING PROTEIN 7"/>
    <property type="match status" value="1"/>
</dbReference>
<dbReference type="Pfam" id="PF00514">
    <property type="entry name" value="Arm"/>
    <property type="match status" value="1"/>
</dbReference>
<dbReference type="SMART" id="SM00185">
    <property type="entry name" value="ARM"/>
    <property type="match status" value="2"/>
</dbReference>
<dbReference type="SUPFAM" id="SSF48371">
    <property type="entry name" value="ARM repeat"/>
    <property type="match status" value="1"/>
</dbReference>
<name>ARMC7_HUMAN</name>
<reference key="1">
    <citation type="journal article" date="2004" name="Nat. Genet.">
        <title>Complete sequencing and characterization of 21,243 full-length human cDNAs.</title>
        <authorList>
            <person name="Ota T."/>
            <person name="Suzuki Y."/>
            <person name="Nishikawa T."/>
            <person name="Otsuki T."/>
            <person name="Sugiyama T."/>
            <person name="Irie R."/>
            <person name="Wakamatsu A."/>
            <person name="Hayashi K."/>
            <person name="Sato H."/>
            <person name="Nagai K."/>
            <person name="Kimura K."/>
            <person name="Makita H."/>
            <person name="Sekine M."/>
            <person name="Obayashi M."/>
            <person name="Nishi T."/>
            <person name="Shibahara T."/>
            <person name="Tanaka T."/>
            <person name="Ishii S."/>
            <person name="Yamamoto J."/>
            <person name="Saito K."/>
            <person name="Kawai Y."/>
            <person name="Isono Y."/>
            <person name="Nakamura Y."/>
            <person name="Nagahari K."/>
            <person name="Murakami K."/>
            <person name="Yasuda T."/>
            <person name="Iwayanagi T."/>
            <person name="Wagatsuma M."/>
            <person name="Shiratori A."/>
            <person name="Sudo H."/>
            <person name="Hosoiri T."/>
            <person name="Kaku Y."/>
            <person name="Kodaira H."/>
            <person name="Kondo H."/>
            <person name="Sugawara M."/>
            <person name="Takahashi M."/>
            <person name="Kanda K."/>
            <person name="Yokoi T."/>
            <person name="Furuya T."/>
            <person name="Kikkawa E."/>
            <person name="Omura Y."/>
            <person name="Abe K."/>
            <person name="Kamihara K."/>
            <person name="Katsuta N."/>
            <person name="Sato K."/>
            <person name="Tanikawa M."/>
            <person name="Yamazaki M."/>
            <person name="Ninomiya K."/>
            <person name="Ishibashi T."/>
            <person name="Yamashita H."/>
            <person name="Murakawa K."/>
            <person name="Fujimori K."/>
            <person name="Tanai H."/>
            <person name="Kimata M."/>
            <person name="Watanabe M."/>
            <person name="Hiraoka S."/>
            <person name="Chiba Y."/>
            <person name="Ishida S."/>
            <person name="Ono Y."/>
            <person name="Takiguchi S."/>
            <person name="Watanabe S."/>
            <person name="Yosida M."/>
            <person name="Hotuta T."/>
            <person name="Kusano J."/>
            <person name="Kanehori K."/>
            <person name="Takahashi-Fujii A."/>
            <person name="Hara H."/>
            <person name="Tanase T.-O."/>
            <person name="Nomura Y."/>
            <person name="Togiya S."/>
            <person name="Komai F."/>
            <person name="Hara R."/>
            <person name="Takeuchi K."/>
            <person name="Arita M."/>
            <person name="Imose N."/>
            <person name="Musashino K."/>
            <person name="Yuuki H."/>
            <person name="Oshima A."/>
            <person name="Sasaki N."/>
            <person name="Aotsuka S."/>
            <person name="Yoshikawa Y."/>
            <person name="Matsunawa H."/>
            <person name="Ichihara T."/>
            <person name="Shiohata N."/>
            <person name="Sano S."/>
            <person name="Moriya S."/>
            <person name="Momiyama H."/>
            <person name="Satoh N."/>
            <person name="Takami S."/>
            <person name="Terashima Y."/>
            <person name="Suzuki O."/>
            <person name="Nakagawa S."/>
            <person name="Senoh A."/>
            <person name="Mizoguchi H."/>
            <person name="Goto Y."/>
            <person name="Shimizu F."/>
            <person name="Wakebe H."/>
            <person name="Hishigaki H."/>
            <person name="Watanabe T."/>
            <person name="Sugiyama A."/>
            <person name="Takemoto M."/>
            <person name="Kawakami B."/>
            <person name="Yamazaki M."/>
            <person name="Watanabe K."/>
            <person name="Kumagai A."/>
            <person name="Itakura S."/>
            <person name="Fukuzumi Y."/>
            <person name="Fujimori Y."/>
            <person name="Komiyama M."/>
            <person name="Tashiro H."/>
            <person name="Tanigami A."/>
            <person name="Fujiwara T."/>
            <person name="Ono T."/>
            <person name="Yamada K."/>
            <person name="Fujii Y."/>
            <person name="Ozaki K."/>
            <person name="Hirao M."/>
            <person name="Ohmori Y."/>
            <person name="Kawabata A."/>
            <person name="Hikiji T."/>
            <person name="Kobatake N."/>
            <person name="Inagaki H."/>
            <person name="Ikema Y."/>
            <person name="Okamoto S."/>
            <person name="Okitani R."/>
            <person name="Kawakami T."/>
            <person name="Noguchi S."/>
            <person name="Itoh T."/>
            <person name="Shigeta K."/>
            <person name="Senba T."/>
            <person name="Matsumura K."/>
            <person name="Nakajima Y."/>
            <person name="Mizuno T."/>
            <person name="Morinaga M."/>
            <person name="Sasaki M."/>
            <person name="Togashi T."/>
            <person name="Oyama M."/>
            <person name="Hata H."/>
            <person name="Watanabe M."/>
            <person name="Komatsu T."/>
            <person name="Mizushima-Sugano J."/>
            <person name="Satoh T."/>
            <person name="Shirai Y."/>
            <person name="Takahashi Y."/>
            <person name="Nakagawa K."/>
            <person name="Okumura K."/>
            <person name="Nagase T."/>
            <person name="Nomura N."/>
            <person name="Kikuchi H."/>
            <person name="Masuho Y."/>
            <person name="Yamashita R."/>
            <person name="Nakai K."/>
            <person name="Yada T."/>
            <person name="Nakamura Y."/>
            <person name="Ohara O."/>
            <person name="Isogai T."/>
            <person name="Sugano S."/>
        </authorList>
    </citation>
    <scope>NUCLEOTIDE SEQUENCE [LARGE SCALE MRNA] (ISOFORMS 1 AND 2)</scope>
    <source>
        <tissue>Small intestine</tissue>
    </source>
</reference>
<reference key="2">
    <citation type="journal article" date="2006" name="Nature">
        <title>DNA sequence of human chromosome 17 and analysis of rearrangement in the human lineage.</title>
        <authorList>
            <person name="Zody M.C."/>
            <person name="Garber M."/>
            <person name="Adams D.J."/>
            <person name="Sharpe T."/>
            <person name="Harrow J."/>
            <person name="Lupski J.R."/>
            <person name="Nicholson C."/>
            <person name="Searle S.M."/>
            <person name="Wilming L."/>
            <person name="Young S.K."/>
            <person name="Abouelleil A."/>
            <person name="Allen N.R."/>
            <person name="Bi W."/>
            <person name="Bloom T."/>
            <person name="Borowsky M.L."/>
            <person name="Bugalter B.E."/>
            <person name="Butler J."/>
            <person name="Chang J.L."/>
            <person name="Chen C.-K."/>
            <person name="Cook A."/>
            <person name="Corum B."/>
            <person name="Cuomo C.A."/>
            <person name="de Jong P.J."/>
            <person name="DeCaprio D."/>
            <person name="Dewar K."/>
            <person name="FitzGerald M."/>
            <person name="Gilbert J."/>
            <person name="Gibson R."/>
            <person name="Gnerre S."/>
            <person name="Goldstein S."/>
            <person name="Grafham D.V."/>
            <person name="Grocock R."/>
            <person name="Hafez N."/>
            <person name="Hagopian D.S."/>
            <person name="Hart E."/>
            <person name="Norman C.H."/>
            <person name="Humphray S."/>
            <person name="Jaffe D.B."/>
            <person name="Jones M."/>
            <person name="Kamal M."/>
            <person name="Khodiyar V.K."/>
            <person name="LaButti K."/>
            <person name="Laird G."/>
            <person name="Lehoczky J."/>
            <person name="Liu X."/>
            <person name="Lokyitsang T."/>
            <person name="Loveland J."/>
            <person name="Lui A."/>
            <person name="Macdonald P."/>
            <person name="Major J.E."/>
            <person name="Matthews L."/>
            <person name="Mauceli E."/>
            <person name="McCarroll S.A."/>
            <person name="Mihalev A.H."/>
            <person name="Mudge J."/>
            <person name="Nguyen C."/>
            <person name="Nicol R."/>
            <person name="O'Leary S.B."/>
            <person name="Osoegawa K."/>
            <person name="Schwartz D.C."/>
            <person name="Shaw-Smith C."/>
            <person name="Stankiewicz P."/>
            <person name="Steward C."/>
            <person name="Swarbreck D."/>
            <person name="Venkataraman V."/>
            <person name="Whittaker C.A."/>
            <person name="Yang X."/>
            <person name="Zimmer A.R."/>
            <person name="Bradley A."/>
            <person name="Hubbard T."/>
            <person name="Birren B.W."/>
            <person name="Rogers J."/>
            <person name="Lander E.S."/>
            <person name="Nusbaum C."/>
        </authorList>
    </citation>
    <scope>NUCLEOTIDE SEQUENCE [LARGE SCALE GENOMIC DNA]</scope>
</reference>
<reference key="3">
    <citation type="journal article" date="2004" name="Genome Res.">
        <title>The status, quality, and expansion of the NIH full-length cDNA project: the Mammalian Gene Collection (MGC).</title>
        <authorList>
            <consortium name="The MGC Project Team"/>
        </authorList>
    </citation>
    <scope>NUCLEOTIDE SEQUENCE [LARGE SCALE MRNA] (ISOFORM 1)</scope>
    <source>
        <tissue>Skin</tissue>
    </source>
</reference>
<reference key="4">
    <citation type="journal article" date="2010" name="Sci. Signal.">
        <title>Quantitative phosphoproteomics reveals widespread full phosphorylation site occupancy during mitosis.</title>
        <authorList>
            <person name="Olsen J.V."/>
            <person name="Vermeulen M."/>
            <person name="Santamaria A."/>
            <person name="Kumar C."/>
            <person name="Miller M.L."/>
            <person name="Jensen L.J."/>
            <person name="Gnad F."/>
            <person name="Cox J."/>
            <person name="Jensen T.S."/>
            <person name="Nigg E.A."/>
            <person name="Brunak S."/>
            <person name="Mann M."/>
        </authorList>
    </citation>
    <scope>PHOSPHORYLATION [LARGE SCALE ANALYSIS] AT SER-169</scope>
    <scope>IDENTIFICATION BY MASS SPECTROMETRY [LARGE SCALE ANALYSIS]</scope>
    <source>
        <tissue>Cervix carcinoma</tissue>
    </source>
</reference>
<reference evidence="4" key="5">
    <citation type="journal article" date="2021" name="Science">
        <title>Structure of the activated human minor spliceosome.</title>
        <authorList>
            <person name="Bai R."/>
            <person name="Wan R."/>
            <person name="Wang L."/>
            <person name="Xu K."/>
            <person name="Zhang Q."/>
            <person name="Lei J."/>
            <person name="Shi Y."/>
        </authorList>
    </citation>
    <scope>STRUCTURE BY ELECTRON MICROSCOPY (2.89 ANGSTROMS)</scope>
    <scope>FUNCTION</scope>
    <scope>SUBUNIT</scope>
</reference>
<feature type="chain" id="PRO_0000242666" description="Armadillo repeat-containing protein 7">
    <location>
        <begin position="1"/>
        <end position="198"/>
    </location>
</feature>
<feature type="repeat" description="ARM 1">
    <location>
        <begin position="57"/>
        <end position="99"/>
    </location>
</feature>
<feature type="repeat" description="ARM 2">
    <location>
        <begin position="100"/>
        <end position="140"/>
    </location>
</feature>
<feature type="modified residue" description="Phosphoserine" evidence="5">
    <location>
        <position position="169"/>
    </location>
</feature>
<feature type="splice variant" id="VSP_056936" description="In isoform 2." evidence="2">
    <original>VLDLFLDSLSEENETLVEFAIGGLCNLCPDRANKEHILHAGGVPLI</original>
    <variation>EACATCAQTGPTRSTSCTQEVSHSSSTAYPAPMRRRCCLPSPRSCT</variation>
    <location>
        <begin position="58"/>
        <end position="103"/>
    </location>
</feature>
<feature type="splice variant" id="VSP_056937" description="In isoform 2." evidence="2">
    <location>
        <begin position="104"/>
        <end position="198"/>
    </location>
</feature>
<feature type="helix" evidence="6">
    <location>
        <begin position="13"/>
        <end position="26"/>
    </location>
</feature>
<feature type="helix" evidence="6">
    <location>
        <begin position="30"/>
        <end position="43"/>
    </location>
</feature>
<feature type="helix" evidence="6">
    <location>
        <begin position="49"/>
        <end position="54"/>
    </location>
</feature>
<feature type="turn" evidence="6">
    <location>
        <begin position="55"/>
        <end position="57"/>
    </location>
</feature>
<feature type="helix" evidence="6">
    <location>
        <begin position="58"/>
        <end position="67"/>
    </location>
</feature>
<feature type="helix" evidence="6">
    <location>
        <begin position="71"/>
        <end position="84"/>
    </location>
</feature>
<feature type="helix" evidence="6">
    <location>
        <begin position="88"/>
        <end position="97"/>
    </location>
</feature>
<feature type="helix" evidence="6">
    <location>
        <begin position="100"/>
        <end position="104"/>
    </location>
</feature>
<feature type="helix" evidence="6">
    <location>
        <begin position="105"/>
        <end position="108"/>
    </location>
</feature>
<feature type="helix" evidence="6">
    <location>
        <begin position="112"/>
        <end position="124"/>
    </location>
</feature>
<feature type="turn" evidence="6">
    <location>
        <begin position="128"/>
        <end position="131"/>
    </location>
</feature>
<feature type="helix" evidence="6">
    <location>
        <begin position="133"/>
        <end position="138"/>
    </location>
</feature>
<feature type="helix" evidence="6">
    <location>
        <begin position="141"/>
        <end position="149"/>
    </location>
</feature>
<feature type="helix" evidence="6">
    <location>
        <begin position="154"/>
        <end position="167"/>
    </location>
</feature>
<feature type="helix" evidence="6">
    <location>
        <begin position="170"/>
        <end position="185"/>
    </location>
</feature>
<keyword id="KW-0002">3D-structure</keyword>
<keyword id="KW-0025">Alternative splicing</keyword>
<keyword id="KW-0507">mRNA processing</keyword>
<keyword id="KW-0508">mRNA splicing</keyword>
<keyword id="KW-0597">Phosphoprotein</keyword>
<keyword id="KW-1267">Proteomics identification</keyword>
<keyword id="KW-1185">Reference proteome</keyword>
<keyword id="KW-0677">Repeat</keyword>
<keyword id="KW-0747">Spliceosome</keyword>
<comment type="function">
    <text evidence="3">As a component of the minor spliceosome, involved in the splicing of U12-type introns in pre-mRNAs.</text>
</comment>
<comment type="subunit">
    <text evidence="1">Component of the minor spliceosome. Within this complex, interacts with RBM48.</text>
</comment>
<comment type="interaction">
    <interactant intactId="EBI-742909">
        <id>Q9H6L4</id>
    </interactant>
    <interactant intactId="EBI-743598">
        <id>Q9NYB9</id>
        <label>ABI2</label>
    </interactant>
    <organismsDiffer>false</organismsDiffer>
    <experiments>4</experiments>
</comment>
<comment type="interaction">
    <interactant intactId="EBI-742909">
        <id>Q9H6L4</id>
    </interactant>
    <interactant intactId="EBI-742038">
        <id>Q9P2A4</id>
        <label>ABI3</label>
    </interactant>
    <organismsDiffer>false</organismsDiffer>
    <experiments>3</experiments>
</comment>
<comment type="interaction">
    <interactant intactId="EBI-742909">
        <id>Q9H6L4</id>
    </interactant>
    <interactant intactId="EBI-741724">
        <id>Q8NA61</id>
        <label>CBY2</label>
    </interactant>
    <organismsDiffer>false</organismsDiffer>
    <experiments>3</experiments>
</comment>
<comment type="interaction">
    <interactant intactId="EBI-742909">
        <id>Q9H6L4</id>
    </interactant>
    <interactant intactId="EBI-12920646">
        <id>Q9BUN5-3</id>
        <label>CCDC28B</label>
    </interactant>
    <organismsDiffer>false</organismsDiffer>
    <experiments>3</experiments>
</comment>
<comment type="interaction">
    <interactant intactId="EBI-742909">
        <id>Q9H6L4</id>
    </interactant>
    <interactant intactId="EBI-11027409">
        <id>Q00587-2</id>
        <label>CDC42EP1</label>
    </interactant>
    <organismsDiffer>false</organismsDiffer>
    <experiments>3</experiments>
</comment>
<comment type="interaction">
    <interactant intactId="EBI-742909">
        <id>Q9H6L4</id>
    </interactant>
    <interactant intactId="EBI-718615">
        <id>Q9H5F2</id>
        <label>CFAP68</label>
    </interactant>
    <organismsDiffer>false</organismsDiffer>
    <experiments>3</experiments>
</comment>
<comment type="interaction">
    <interactant intactId="EBI-742909">
        <id>Q9H6L4</id>
    </interactant>
    <interactant intactId="EBI-743375">
        <id>Q9NX63</id>
        <label>CHCHD3</label>
    </interactant>
    <organismsDiffer>false</organismsDiffer>
    <experiments>3</experiments>
</comment>
<comment type="interaction">
    <interactant intactId="EBI-742909">
        <id>Q9H6L4</id>
    </interactant>
    <interactant intactId="EBI-358410">
        <id>Q16630</id>
        <label>CPSF6</label>
    </interactant>
    <organismsDiffer>false</organismsDiffer>
    <experiments>4</experiments>
</comment>
<comment type="interaction">
    <interactant intactId="EBI-742909">
        <id>Q9H6L4</id>
    </interactant>
    <interactant intactId="EBI-11088043">
        <id>Q16630-2</id>
        <label>CPSF6</label>
    </interactant>
    <organismsDiffer>false</organismsDiffer>
    <experiments>3</experiments>
</comment>
<comment type="interaction">
    <interactant intactId="EBI-742909">
        <id>Q9H6L4</id>
    </interactant>
    <interactant intactId="EBI-746909">
        <id>Q8N684</id>
        <label>CPSF7</label>
    </interactant>
    <organismsDiffer>false</organismsDiffer>
    <experiments>3</experiments>
</comment>
<comment type="interaction">
    <interactant intactId="EBI-742909">
        <id>Q9H6L4</id>
    </interactant>
    <interactant intactId="EBI-11523759">
        <id>Q8N684-3</id>
        <label>CPSF7</label>
    </interactant>
    <organismsDiffer>false</organismsDiffer>
    <experiments>3</experiments>
</comment>
<comment type="interaction">
    <interactant intactId="EBI-742909">
        <id>Q9H6L4</id>
    </interactant>
    <interactant intactId="EBI-11988027">
        <id>Q9NRI5-2</id>
        <label>DISC1</label>
    </interactant>
    <organismsDiffer>false</organismsDiffer>
    <experiments>3</experiments>
</comment>
<comment type="interaction">
    <interactant intactId="EBI-742909">
        <id>Q9H6L4</id>
    </interactant>
    <interactant intactId="EBI-18398199">
        <id>A0A0U1RQF7</id>
        <label>DPEP2NB</label>
    </interactant>
    <organismsDiffer>false</organismsDiffer>
    <experiments>3</experiments>
</comment>
<comment type="interaction">
    <interactant intactId="EBI-742909">
        <id>Q9H6L4</id>
    </interactant>
    <interactant intactId="EBI-740376">
        <id>Q86UW9</id>
        <label>DTX2</label>
    </interactant>
    <organismsDiffer>false</organismsDiffer>
    <experiments>3</experiments>
</comment>
<comment type="interaction">
    <interactant intactId="EBI-742909">
        <id>Q9H6L4</id>
    </interactant>
    <interactant intactId="EBI-2349927">
        <id>Q5JST6</id>
        <label>EFHC2</label>
    </interactant>
    <organismsDiffer>false</organismsDiffer>
    <experiments>3</experiments>
</comment>
<comment type="interaction">
    <interactant intactId="EBI-742909">
        <id>Q9H6L4</id>
    </interactant>
    <interactant intactId="EBI-3928124">
        <id>Q96DF8</id>
        <label>ESS2</label>
    </interactant>
    <organismsDiffer>false</organismsDiffer>
    <experiments>3</experiments>
</comment>
<comment type="interaction">
    <interactant intactId="EBI-742909">
        <id>Q9H6L4</id>
    </interactant>
    <interactant intactId="EBI-9090198">
        <id>P15976-2</id>
        <label>GATA1</label>
    </interactant>
    <organismsDiffer>false</organismsDiffer>
    <experiments>3</experiments>
</comment>
<comment type="interaction">
    <interactant intactId="EBI-742909">
        <id>Q9H6L4</id>
    </interactant>
    <interactant intactId="EBI-947774">
        <id>O75420</id>
        <label>GIGYF1</label>
    </interactant>
    <organismsDiffer>false</organismsDiffer>
    <experiments>3</experiments>
</comment>
<comment type="interaction">
    <interactant intactId="EBI-742909">
        <id>Q9H6L4</id>
    </interactant>
    <interactant intactId="EBI-740220">
        <id>O14964</id>
        <label>HGS</label>
    </interactant>
    <organismsDiffer>false</organismsDiffer>
    <experiments>3</experiments>
</comment>
<comment type="interaction">
    <interactant intactId="EBI-742909">
        <id>Q9H6L4</id>
    </interactant>
    <interactant intactId="EBI-740785">
        <id>P49639</id>
        <label>HOXA1</label>
    </interactant>
    <organismsDiffer>false</organismsDiffer>
    <experiments>3</experiments>
</comment>
<comment type="interaction">
    <interactant intactId="EBI-742909">
        <id>Q9H6L4</id>
    </interactant>
    <interactant intactId="EBI-745305">
        <id>Q13422</id>
        <label>IKZF1</label>
    </interactant>
    <organismsDiffer>false</organismsDiffer>
    <experiments>3</experiments>
</comment>
<comment type="interaction">
    <interactant intactId="EBI-742909">
        <id>Q9H6L4</id>
    </interactant>
    <interactant intactId="EBI-747204">
        <id>Q9UKT9</id>
        <label>IKZF3</label>
    </interactant>
    <organismsDiffer>false</organismsDiffer>
    <experiments>9</experiments>
</comment>
<comment type="interaction">
    <interactant intactId="EBI-742909">
        <id>Q9H6L4</id>
    </interactant>
    <interactant intactId="EBI-6509505">
        <id>Q0VD86</id>
        <label>INCA1</label>
    </interactant>
    <organismsDiffer>false</organismsDiffer>
    <experiments>3</experiments>
</comment>
<comment type="interaction">
    <interactant intactId="EBI-742909">
        <id>Q9H6L4</id>
    </interactant>
    <interactant intactId="EBI-742916">
        <id>Q8WZ19</id>
        <label>KCTD13</label>
    </interactant>
    <organismsDiffer>false</organismsDiffer>
    <experiments>4</experiments>
</comment>
<comment type="interaction">
    <interactant intactId="EBI-742909">
        <id>Q9H6L4</id>
    </interactant>
    <interactant intactId="EBI-948001">
        <id>Q15323</id>
        <label>KRT31</label>
    </interactant>
    <organismsDiffer>false</organismsDiffer>
    <experiments>6</experiments>
</comment>
<comment type="interaction">
    <interactant intactId="EBI-742909">
        <id>Q9H6L4</id>
    </interactant>
    <interactant intactId="EBI-1047093">
        <id>O76011</id>
        <label>KRT34</label>
    </interactant>
    <organismsDiffer>false</organismsDiffer>
    <experiments>3</experiments>
</comment>
<comment type="interaction">
    <interactant intactId="EBI-742909">
        <id>Q9H6L4</id>
    </interactant>
    <interactant intactId="EBI-11958242">
        <id>Q6A163</id>
        <label>KRT39</label>
    </interactant>
    <organismsDiffer>false</organismsDiffer>
    <experiments>3</experiments>
</comment>
<comment type="interaction">
    <interactant intactId="EBI-742909">
        <id>Q9H6L4</id>
    </interactant>
    <interactant intactId="EBI-10171697">
        <id>Q6A162</id>
        <label>KRT40</label>
    </interactant>
    <organismsDiffer>false</organismsDiffer>
    <experiments>6</experiments>
</comment>
<comment type="interaction">
    <interactant intactId="EBI-742909">
        <id>Q9H6L4</id>
    </interactant>
    <interactant intactId="EBI-2949715">
        <id>O95678</id>
        <label>KRT75</label>
    </interactant>
    <organismsDiffer>false</organismsDiffer>
    <experiments>3</experiments>
</comment>
<comment type="interaction">
    <interactant intactId="EBI-742909">
        <id>Q9H6L4</id>
    </interactant>
    <interactant intactId="EBI-10241353">
        <id>Q3SYF9</id>
        <label>KRTAP19-7</label>
    </interactant>
    <organismsDiffer>false</organismsDiffer>
    <experiments>3</experiments>
</comment>
<comment type="interaction">
    <interactant intactId="EBI-742909">
        <id>Q9H6L4</id>
    </interactant>
    <interactant intactId="EBI-22311199">
        <id>Q3LI67</id>
        <label>KRTAP6-3</label>
    </interactant>
    <organismsDiffer>false</organismsDiffer>
    <experiments>3</experiments>
</comment>
<comment type="interaction">
    <interactant intactId="EBI-742909">
        <id>Q9H6L4</id>
    </interactant>
    <interactant intactId="EBI-741037">
        <id>Q9BRK4</id>
        <label>LZTS2</label>
    </interactant>
    <organismsDiffer>false</organismsDiffer>
    <experiments>3</experiments>
</comment>
<comment type="interaction">
    <interactant intactId="EBI-742909">
        <id>Q9H6L4</id>
    </interactant>
    <interactant intactId="EBI-724076">
        <id>Q99750</id>
        <label>MDFI</label>
    </interactant>
    <organismsDiffer>false</organismsDiffer>
    <experiments>3</experiments>
</comment>
<comment type="interaction">
    <interactant intactId="EBI-742909">
        <id>Q9H6L4</id>
    </interactant>
    <interactant intactId="EBI-744871">
        <id>O00746</id>
        <label>NME4</label>
    </interactant>
    <organismsDiffer>false</organismsDiffer>
    <experiments>3</experiments>
</comment>
<comment type="interaction">
    <interactant intactId="EBI-742909">
        <id>Q9H6L4</id>
    </interactant>
    <interactant intactId="EBI-741896">
        <id>Q9P286</id>
        <label>PAK5</label>
    </interactant>
    <organismsDiffer>false</organismsDiffer>
    <experiments>3</experiments>
</comment>
<comment type="interaction">
    <interactant intactId="EBI-742909">
        <id>Q9H6L4</id>
    </interactant>
    <interactant intactId="EBI-2568609">
        <id>Q9BSJ6</id>
        <label>PIMREG</label>
    </interactant>
    <organismsDiffer>false</organismsDiffer>
    <experiments>3</experiments>
</comment>
<comment type="interaction">
    <interactant intactId="EBI-742909">
        <id>Q9H6L4</id>
    </interactant>
    <interactant intactId="EBI-949255">
        <id>Q58EX7</id>
        <label>PLEKHG4</label>
    </interactant>
    <organismsDiffer>false</organismsDiffer>
    <experiments>3</experiments>
</comment>
<comment type="interaction">
    <interactant intactId="EBI-742909">
        <id>Q9H6L4</id>
    </interactant>
    <interactant intactId="EBI-721270">
        <id>P0CW24</id>
        <label>PNMA6A</label>
    </interactant>
    <organismsDiffer>false</organismsDiffer>
    <experiments>3</experiments>
</comment>
<comment type="interaction">
    <interactant intactId="EBI-742909">
        <id>Q9H6L4</id>
    </interactant>
    <interactant intactId="EBI-473821">
        <id>Q5RL73</id>
        <label>RBM48</label>
    </interactant>
    <organismsDiffer>false</organismsDiffer>
    <experiments>6</experiments>
</comment>
<comment type="interaction">
    <interactant intactId="EBI-742909">
        <id>Q9H6L4</id>
    </interactant>
    <interactant intactId="EBI-10829018">
        <id>Q04864-2</id>
        <label>REL</label>
    </interactant>
    <organismsDiffer>false</organismsDiffer>
    <experiments>3</experiments>
</comment>
<comment type="interaction">
    <interactant intactId="EBI-742909">
        <id>Q9H6L4</id>
    </interactant>
    <interactant intactId="EBI-7223720">
        <id>Q9Y3A4</id>
        <label>RRP7A</label>
    </interactant>
    <organismsDiffer>false</organismsDiffer>
    <experiments>3</experiments>
</comment>
<comment type="interaction">
    <interactant intactId="EBI-742909">
        <id>Q9H6L4</id>
    </interactant>
    <interactant intactId="EBI-747225">
        <id>Q59EK9</id>
        <label>RUNDC3A</label>
    </interactant>
    <organismsDiffer>false</organismsDiffer>
    <experiments>3</experiments>
</comment>
<comment type="interaction">
    <interactant intactId="EBI-742909">
        <id>Q9H6L4</id>
    </interactant>
    <interactant intactId="EBI-11957366">
        <id>Q59EK9-3</id>
        <label>RUNDC3A</label>
    </interactant>
    <organismsDiffer>false</organismsDiffer>
    <experiments>3</experiments>
</comment>
<comment type="interaction">
    <interactant intactId="EBI-742909">
        <id>Q9H6L4</id>
    </interactant>
    <interactant intactId="EBI-3957636">
        <id>Q8IYX7</id>
        <label>SAXO1</label>
    </interactant>
    <organismsDiffer>false</organismsDiffer>
    <experiments>3</experiments>
</comment>
<comment type="interaction">
    <interactant intactId="EBI-742909">
        <id>Q9H6L4</id>
    </interactant>
    <interactant intactId="EBI-12021638">
        <id>Q8NA69</id>
        <label>SAXO5</label>
    </interactant>
    <organismsDiffer>false</organismsDiffer>
    <experiments>3</experiments>
</comment>
<comment type="interaction">
    <interactant intactId="EBI-742909">
        <id>Q9H6L4</id>
    </interactant>
    <interactant intactId="EBI-2009297">
        <id>Q6ZU15</id>
        <label>SEPTIN14</label>
    </interactant>
    <organismsDiffer>false</organismsDiffer>
    <experiments>3</experiments>
</comment>
<comment type="interaction">
    <interactant intactId="EBI-742909">
        <id>Q9H6L4</id>
    </interactant>
    <interactant intactId="EBI-12037847">
        <id>Q6ZSJ9</id>
        <label>SHISA6</label>
    </interactant>
    <organismsDiffer>false</organismsDiffer>
    <experiments>3</experiments>
</comment>
<comment type="interaction">
    <interactant intactId="EBI-742909">
        <id>Q9H6L4</id>
    </interactant>
    <interactant intactId="EBI-10269374">
        <id>Q8ND83</id>
        <label>SLAIN1</label>
    </interactant>
    <organismsDiffer>false</organismsDiffer>
    <experiments>3</experiments>
</comment>
<comment type="interaction">
    <interactant intactId="EBI-742909">
        <id>Q9H6L4</id>
    </interactant>
    <interactant intactId="EBI-372911">
        <id>Q9H0A9</id>
        <label>SPATC1L</label>
    </interactant>
    <organismsDiffer>false</organismsDiffer>
    <experiments>3</experiments>
</comment>
<comment type="interaction">
    <interactant intactId="EBI-742909">
        <id>Q9H6L4</id>
    </interactant>
    <interactant intactId="EBI-11995806">
        <id>Q9H0A9-2</id>
        <label>SPATC1L</label>
    </interactant>
    <organismsDiffer>false</organismsDiffer>
    <experiments>3</experiments>
</comment>
<comment type="interaction">
    <interactant intactId="EBI-742909">
        <id>Q9H6L4</id>
    </interactant>
    <interactant intactId="EBI-742688">
        <id>Q9NZD8</id>
        <label>SPG21</label>
    </interactant>
    <organismsDiffer>false</organismsDiffer>
    <experiments>3</experiments>
</comment>
<comment type="interaction">
    <interactant intactId="EBI-742909">
        <id>Q9H6L4</id>
    </interactant>
    <interactant intactId="EBI-2557644">
        <id>O95926</id>
        <label>SYF2</label>
    </interactant>
    <organismsDiffer>false</organismsDiffer>
    <experiments>3</experiments>
</comment>
<comment type="interaction">
    <interactant intactId="EBI-742909">
        <id>Q9H6L4</id>
    </interactant>
    <interactant intactId="EBI-745958">
        <id>Q5VWN6</id>
        <label>TASOR2</label>
    </interactant>
    <organismsDiffer>false</organismsDiffer>
    <experiments>3</experiments>
</comment>
<comment type="interaction">
    <interactant intactId="EBI-742909">
        <id>Q9H6L4</id>
    </interactant>
    <interactant intactId="EBI-533224">
        <id>P15884</id>
        <label>TCF4</label>
    </interactant>
    <organismsDiffer>false</organismsDiffer>
    <experiments>3</experiments>
</comment>
<comment type="interaction">
    <interactant intactId="EBI-742909">
        <id>Q9H6L4</id>
    </interactant>
    <interactant intactId="EBI-2505861">
        <id>Q13829</id>
        <label>TNFAIP1</label>
    </interactant>
    <organismsDiffer>false</organismsDiffer>
    <experiments>6</experiments>
</comment>
<comment type="interaction">
    <interactant intactId="EBI-742909">
        <id>Q9H6L4</id>
    </interactant>
    <interactant intactId="EBI-746692">
        <id>P19237</id>
        <label>TNNI1</label>
    </interactant>
    <organismsDiffer>false</organismsDiffer>
    <experiments>3</experiments>
</comment>
<comment type="interaction">
    <interactant intactId="EBI-742909">
        <id>Q9H6L4</id>
    </interactant>
    <interactant intactId="EBI-492476">
        <id>Q96RU7</id>
        <label>TRIB3</label>
    </interactant>
    <organismsDiffer>false</organismsDiffer>
    <experiments>3</experiments>
</comment>
<comment type="interaction">
    <interactant intactId="EBI-742909">
        <id>Q9H6L4</id>
    </interactant>
    <interactant intactId="EBI-719493">
        <id>P14373</id>
        <label>TRIM27</label>
    </interactant>
    <organismsDiffer>false</organismsDiffer>
    <experiments>6</experiments>
</comment>
<comment type="interaction">
    <interactant intactId="EBI-742909">
        <id>Q9H6L4</id>
    </interactant>
    <interactant intactId="EBI-5235829">
        <id>Q8IWZ5</id>
        <label>TRIM42</label>
    </interactant>
    <organismsDiffer>false</organismsDiffer>
    <experiments>3</experiments>
</comment>
<comment type="interaction">
    <interactant intactId="EBI-742909">
        <id>Q9H6L4</id>
    </interactant>
    <interactant intactId="EBI-2130429">
        <id>Q9BYV2</id>
        <label>TRIM54</label>
    </interactant>
    <organismsDiffer>false</organismsDiffer>
    <experiments>3</experiments>
</comment>
<comment type="interaction">
    <interactant intactId="EBI-742909">
        <id>Q9H6L4</id>
    </interactant>
    <interactant intactId="EBI-11975223">
        <id>Q70EL1-9</id>
        <label>USP54</label>
    </interactant>
    <organismsDiffer>false</organismsDiffer>
    <experiments>3</experiments>
</comment>
<comment type="interaction">
    <interactant intactId="EBI-742909">
        <id>Q9H6L4</id>
    </interactant>
    <interactant intactId="EBI-353844">
        <id>P08670</id>
        <label>VIM</label>
    </interactant>
    <organismsDiffer>false</organismsDiffer>
    <experiments>3</experiments>
</comment>
<comment type="interaction">
    <interactant intactId="EBI-742909">
        <id>Q9H6L4</id>
    </interactant>
    <interactant intactId="EBI-7604353">
        <id>Q86XT2</id>
        <label>VPS37D</label>
    </interactant>
    <organismsDiffer>false</organismsDiffer>
    <experiments>3</experiments>
</comment>
<comment type="interaction">
    <interactant intactId="EBI-742909">
        <id>Q9H6L4</id>
    </interactant>
    <interactant intactId="EBI-742740">
        <id>Q96BR9</id>
        <label>ZBTB8A</label>
    </interactant>
    <organismsDiffer>false</organismsDiffer>
    <experiments>3</experiments>
</comment>
<comment type="interaction">
    <interactant intactId="EBI-742909">
        <id>Q9H6L4</id>
    </interactant>
    <interactant intactId="EBI-14104088">
        <id>Q53FD0-2</id>
        <label>ZC2HC1C</label>
    </interactant>
    <organismsDiffer>false</organismsDiffer>
    <experiments>3</experiments>
</comment>
<comment type="interaction">
    <interactant intactId="EBI-742909">
        <id>Q9H6L4</id>
    </interactant>
    <interactant intactId="EBI-7850213">
        <id>Q9UDW3</id>
        <label>ZMAT5</label>
    </interactant>
    <organismsDiffer>false</organismsDiffer>
    <experiments>3</experiments>
</comment>
<comment type="interaction">
    <interactant intactId="EBI-742909">
        <id>Q9H6L4</id>
    </interactant>
    <interactant intactId="EBI-12069140">
        <id>P52738</id>
        <label>ZNF140</label>
    </interactant>
    <organismsDiffer>false</organismsDiffer>
    <experiments>3</experiments>
</comment>
<comment type="interaction">
    <interactant intactId="EBI-742909">
        <id>Q9H6L4</id>
    </interactant>
    <interactant intactId="EBI-743265">
        <id>Q9BUY5</id>
        <label>ZNF426</label>
    </interactant>
    <organismsDiffer>false</organismsDiffer>
    <experiments>3</experiments>
</comment>
<comment type="interaction">
    <interactant intactId="EBI-742909">
        <id>Q9H6L4</id>
    </interactant>
    <interactant intactId="EBI-12006574">
        <id>Q96BR6</id>
        <label>ZNF669</label>
    </interactant>
    <organismsDiffer>false</organismsDiffer>
    <experiments>3</experiments>
</comment>
<comment type="interaction">
    <interactant intactId="EBI-742909">
        <id>Q9H6L4</id>
    </interactant>
    <interactant intactId="EBI-745775">
        <id>Q96H86</id>
        <label>ZNF764</label>
    </interactant>
    <organismsDiffer>false</organismsDiffer>
    <experiments>3</experiments>
</comment>
<comment type="alternative products">
    <event type="alternative splicing"/>
    <isoform>
        <id>Q9H6L4-1</id>
        <name>1</name>
        <sequence type="displayed"/>
    </isoform>
    <isoform>
        <id>Q9H6L4-2</id>
        <name>2</name>
        <sequence type="described" ref="VSP_056936 VSP_056937"/>
    </isoform>
</comment>
<organism>
    <name type="scientific">Homo sapiens</name>
    <name type="common">Human</name>
    <dbReference type="NCBI Taxonomy" id="9606"/>
    <lineage>
        <taxon>Eukaryota</taxon>
        <taxon>Metazoa</taxon>
        <taxon>Chordata</taxon>
        <taxon>Craniata</taxon>
        <taxon>Vertebrata</taxon>
        <taxon>Euteleostomi</taxon>
        <taxon>Mammalia</taxon>
        <taxon>Eutheria</taxon>
        <taxon>Euarchontoglires</taxon>
        <taxon>Primates</taxon>
        <taxon>Haplorrhini</taxon>
        <taxon>Catarrhini</taxon>
        <taxon>Hominidae</taxon>
        <taxon>Homo</taxon>
    </lineage>
</organism>
<gene>
    <name type="primary">ARMC7</name>
</gene>
<sequence length="198" mass="21924">MAQKPKVDPHVGRLGYLQALVTEFQETQSQDAKEQVLANLANFAYDPSNYEYLRQLQVLDLFLDSLSEENETLVEFAIGGLCNLCPDRANKEHILHAGGVPLIINCLSSPNEETVLSAITTLMHLSPPGRSFLPELTATPVVQCMLRFSLSASARLRNLAQIFLEDFCSPRQVAEARSRQAHSALGIPLPRSVAPRQR</sequence>